<sequence>MKEFDTIAAVATPVGEGGISIIRISGDKSLDIVSSIFKGKNDRTLDDIKPYSMRYGFIIEKESKEMIDEVLVSYMKGPRSFTAEDTLEINCHGGVIPTKKILKELIKSGARLAEPGEFTKRAFLNGRIDLSQAEAVIDIIRSKTDLSMKSALKQAEGTLSKEINSIRNRMIKIIAHIEATVDYPEDDLEEITGQKIKVDLKEIINKIDNLISASEEGKILREGLNTVIVGKPNVGKSSLLNALINENKAIVTEIPGTTRDVIEEYINIDGIPIKIVDTAGIRETEDVVEKIGVEKSKEKIDEADLVIFMLDLSRKIDEEDIEIMDFIKNKKYIVLLNKLDLNKDLNEENHFIKELDSKYIIKTSVKNNSGLNELKECIKNLFFSGEIKSDELIVTNARHQEALIRSRESCIQAIETLSDEISIDLASIDIRNAWKYLGEITGDTLDENIIDKIFSEFCLGK</sequence>
<feature type="chain" id="PRO_0000345764" description="tRNA modification GTPase MnmE">
    <location>
        <begin position="1"/>
        <end position="461"/>
    </location>
</feature>
<feature type="domain" description="TrmE-type G">
    <location>
        <begin position="223"/>
        <end position="383"/>
    </location>
</feature>
<feature type="binding site" evidence="1">
    <location>
        <position position="23"/>
    </location>
    <ligand>
        <name>(6S)-5-formyl-5,6,7,8-tetrahydrofolate</name>
        <dbReference type="ChEBI" id="CHEBI:57457"/>
    </ligand>
</feature>
<feature type="binding site" evidence="1">
    <location>
        <position position="88"/>
    </location>
    <ligand>
        <name>(6S)-5-formyl-5,6,7,8-tetrahydrofolate</name>
        <dbReference type="ChEBI" id="CHEBI:57457"/>
    </ligand>
</feature>
<feature type="binding site" evidence="1">
    <location>
        <position position="127"/>
    </location>
    <ligand>
        <name>(6S)-5-formyl-5,6,7,8-tetrahydrofolate</name>
        <dbReference type="ChEBI" id="CHEBI:57457"/>
    </ligand>
</feature>
<feature type="binding site" evidence="1">
    <location>
        <begin position="233"/>
        <end position="238"/>
    </location>
    <ligand>
        <name>GTP</name>
        <dbReference type="ChEBI" id="CHEBI:37565"/>
    </ligand>
</feature>
<feature type="binding site" evidence="1">
    <location>
        <position position="233"/>
    </location>
    <ligand>
        <name>K(+)</name>
        <dbReference type="ChEBI" id="CHEBI:29103"/>
    </ligand>
</feature>
<feature type="binding site" evidence="1">
    <location>
        <position position="237"/>
    </location>
    <ligand>
        <name>Mg(2+)</name>
        <dbReference type="ChEBI" id="CHEBI:18420"/>
    </ligand>
</feature>
<feature type="binding site" evidence="1">
    <location>
        <begin position="252"/>
        <end position="258"/>
    </location>
    <ligand>
        <name>GTP</name>
        <dbReference type="ChEBI" id="CHEBI:37565"/>
    </ligand>
</feature>
<feature type="binding site" evidence="1">
    <location>
        <position position="252"/>
    </location>
    <ligand>
        <name>K(+)</name>
        <dbReference type="ChEBI" id="CHEBI:29103"/>
    </ligand>
</feature>
<feature type="binding site" evidence="1">
    <location>
        <position position="254"/>
    </location>
    <ligand>
        <name>K(+)</name>
        <dbReference type="ChEBI" id="CHEBI:29103"/>
    </ligand>
</feature>
<feature type="binding site" evidence="1">
    <location>
        <position position="257"/>
    </location>
    <ligand>
        <name>K(+)</name>
        <dbReference type="ChEBI" id="CHEBI:29103"/>
    </ligand>
</feature>
<feature type="binding site" evidence="1">
    <location>
        <position position="258"/>
    </location>
    <ligand>
        <name>Mg(2+)</name>
        <dbReference type="ChEBI" id="CHEBI:18420"/>
    </ligand>
</feature>
<feature type="binding site" evidence="1">
    <location>
        <begin position="277"/>
        <end position="280"/>
    </location>
    <ligand>
        <name>GTP</name>
        <dbReference type="ChEBI" id="CHEBI:37565"/>
    </ligand>
</feature>
<feature type="binding site" evidence="1">
    <location>
        <position position="461"/>
    </location>
    <ligand>
        <name>(6S)-5-formyl-5,6,7,8-tetrahydrofolate</name>
        <dbReference type="ChEBI" id="CHEBI:57457"/>
    </ligand>
</feature>
<gene>
    <name evidence="1" type="primary">mnmE</name>
    <name evidence="1" type="synonym">trmE</name>
    <name type="ordered locus">CLD_0831</name>
</gene>
<proteinExistence type="inferred from homology"/>
<organism>
    <name type="scientific">Clostridium botulinum (strain Okra / Type B1)</name>
    <dbReference type="NCBI Taxonomy" id="498213"/>
    <lineage>
        <taxon>Bacteria</taxon>
        <taxon>Bacillati</taxon>
        <taxon>Bacillota</taxon>
        <taxon>Clostridia</taxon>
        <taxon>Eubacteriales</taxon>
        <taxon>Clostridiaceae</taxon>
        <taxon>Clostridium</taxon>
    </lineage>
</organism>
<keyword id="KW-0963">Cytoplasm</keyword>
<keyword id="KW-0342">GTP-binding</keyword>
<keyword id="KW-0378">Hydrolase</keyword>
<keyword id="KW-0460">Magnesium</keyword>
<keyword id="KW-0479">Metal-binding</keyword>
<keyword id="KW-0547">Nucleotide-binding</keyword>
<keyword id="KW-0630">Potassium</keyword>
<keyword id="KW-0819">tRNA processing</keyword>
<dbReference type="EC" id="3.6.-.-" evidence="1"/>
<dbReference type="EMBL" id="CP000939">
    <property type="protein sequence ID" value="ACA45641.1"/>
    <property type="molecule type" value="Genomic_DNA"/>
</dbReference>
<dbReference type="RefSeq" id="WP_003359423.1">
    <property type="nucleotide sequence ID" value="NC_010516.1"/>
</dbReference>
<dbReference type="SMR" id="B1IHR9"/>
<dbReference type="GeneID" id="5204342"/>
<dbReference type="KEGG" id="cbb:CLD_0831"/>
<dbReference type="HOGENOM" id="CLU_019624_4_1_9"/>
<dbReference type="Proteomes" id="UP000008541">
    <property type="component" value="Chromosome"/>
</dbReference>
<dbReference type="GO" id="GO:0005829">
    <property type="term" value="C:cytosol"/>
    <property type="evidence" value="ECO:0007669"/>
    <property type="project" value="TreeGrafter"/>
</dbReference>
<dbReference type="GO" id="GO:0005525">
    <property type="term" value="F:GTP binding"/>
    <property type="evidence" value="ECO:0007669"/>
    <property type="project" value="UniProtKB-UniRule"/>
</dbReference>
<dbReference type="GO" id="GO:0003924">
    <property type="term" value="F:GTPase activity"/>
    <property type="evidence" value="ECO:0007669"/>
    <property type="project" value="UniProtKB-UniRule"/>
</dbReference>
<dbReference type="GO" id="GO:0046872">
    <property type="term" value="F:metal ion binding"/>
    <property type="evidence" value="ECO:0007669"/>
    <property type="project" value="UniProtKB-KW"/>
</dbReference>
<dbReference type="GO" id="GO:0030488">
    <property type="term" value="P:tRNA methylation"/>
    <property type="evidence" value="ECO:0007669"/>
    <property type="project" value="TreeGrafter"/>
</dbReference>
<dbReference type="GO" id="GO:0002098">
    <property type="term" value="P:tRNA wobble uridine modification"/>
    <property type="evidence" value="ECO:0007669"/>
    <property type="project" value="TreeGrafter"/>
</dbReference>
<dbReference type="CDD" id="cd04164">
    <property type="entry name" value="trmE"/>
    <property type="match status" value="1"/>
</dbReference>
<dbReference type="CDD" id="cd14858">
    <property type="entry name" value="TrmE_N"/>
    <property type="match status" value="1"/>
</dbReference>
<dbReference type="FunFam" id="3.30.1360.120:FF:000003">
    <property type="entry name" value="tRNA modification GTPase MnmE"/>
    <property type="match status" value="1"/>
</dbReference>
<dbReference type="FunFam" id="3.40.50.300:FF:000494">
    <property type="entry name" value="tRNA modification GTPase MnmE"/>
    <property type="match status" value="1"/>
</dbReference>
<dbReference type="Gene3D" id="3.40.50.300">
    <property type="entry name" value="P-loop containing nucleotide triphosphate hydrolases"/>
    <property type="match status" value="1"/>
</dbReference>
<dbReference type="Gene3D" id="3.30.1360.120">
    <property type="entry name" value="Probable tRNA modification gtpase trme, domain 1"/>
    <property type="match status" value="1"/>
</dbReference>
<dbReference type="Gene3D" id="1.20.120.430">
    <property type="entry name" value="tRNA modification GTPase MnmE domain 2"/>
    <property type="match status" value="1"/>
</dbReference>
<dbReference type="HAMAP" id="MF_00379">
    <property type="entry name" value="GTPase_MnmE"/>
    <property type="match status" value="1"/>
</dbReference>
<dbReference type="InterPro" id="IPR031168">
    <property type="entry name" value="G_TrmE"/>
</dbReference>
<dbReference type="InterPro" id="IPR006073">
    <property type="entry name" value="GTP-bd"/>
</dbReference>
<dbReference type="InterPro" id="IPR018948">
    <property type="entry name" value="GTP-bd_TrmE_N"/>
</dbReference>
<dbReference type="InterPro" id="IPR004520">
    <property type="entry name" value="GTPase_MnmE"/>
</dbReference>
<dbReference type="InterPro" id="IPR027368">
    <property type="entry name" value="MnmE_dom2"/>
</dbReference>
<dbReference type="InterPro" id="IPR025867">
    <property type="entry name" value="MnmE_helical"/>
</dbReference>
<dbReference type="InterPro" id="IPR027417">
    <property type="entry name" value="P-loop_NTPase"/>
</dbReference>
<dbReference type="InterPro" id="IPR005225">
    <property type="entry name" value="Small_GTP-bd"/>
</dbReference>
<dbReference type="InterPro" id="IPR027266">
    <property type="entry name" value="TrmE/GcvT_dom1"/>
</dbReference>
<dbReference type="NCBIfam" id="TIGR00450">
    <property type="entry name" value="mnmE_trmE_thdF"/>
    <property type="match status" value="1"/>
</dbReference>
<dbReference type="NCBIfam" id="NF003661">
    <property type="entry name" value="PRK05291.1-3"/>
    <property type="match status" value="1"/>
</dbReference>
<dbReference type="NCBIfam" id="TIGR00231">
    <property type="entry name" value="small_GTP"/>
    <property type="match status" value="1"/>
</dbReference>
<dbReference type="PANTHER" id="PTHR42714">
    <property type="entry name" value="TRNA MODIFICATION GTPASE GTPBP3"/>
    <property type="match status" value="1"/>
</dbReference>
<dbReference type="PANTHER" id="PTHR42714:SF2">
    <property type="entry name" value="TRNA MODIFICATION GTPASE GTPBP3, MITOCHONDRIAL"/>
    <property type="match status" value="1"/>
</dbReference>
<dbReference type="Pfam" id="PF01926">
    <property type="entry name" value="MMR_HSR1"/>
    <property type="match status" value="1"/>
</dbReference>
<dbReference type="Pfam" id="PF12631">
    <property type="entry name" value="MnmE_helical"/>
    <property type="match status" value="1"/>
</dbReference>
<dbReference type="Pfam" id="PF10396">
    <property type="entry name" value="TrmE_N"/>
    <property type="match status" value="1"/>
</dbReference>
<dbReference type="SUPFAM" id="SSF52540">
    <property type="entry name" value="P-loop containing nucleoside triphosphate hydrolases"/>
    <property type="match status" value="1"/>
</dbReference>
<dbReference type="SUPFAM" id="SSF116878">
    <property type="entry name" value="TrmE connector domain"/>
    <property type="match status" value="1"/>
</dbReference>
<dbReference type="PROSITE" id="PS51709">
    <property type="entry name" value="G_TRME"/>
    <property type="match status" value="1"/>
</dbReference>
<evidence type="ECO:0000255" key="1">
    <source>
        <dbReference type="HAMAP-Rule" id="MF_00379"/>
    </source>
</evidence>
<name>MNME_CLOBK</name>
<protein>
    <recommendedName>
        <fullName evidence="1">tRNA modification GTPase MnmE</fullName>
        <ecNumber evidence="1">3.6.-.-</ecNumber>
    </recommendedName>
</protein>
<comment type="function">
    <text evidence="1">Exhibits a very high intrinsic GTPase hydrolysis rate. Involved in the addition of a carboxymethylaminomethyl (cmnm) group at the wobble position (U34) of certain tRNAs, forming tRNA-cmnm(5)s(2)U34.</text>
</comment>
<comment type="cofactor">
    <cofactor evidence="1">
        <name>K(+)</name>
        <dbReference type="ChEBI" id="CHEBI:29103"/>
    </cofactor>
    <text evidence="1">Binds 1 potassium ion per subunit.</text>
</comment>
<comment type="subunit">
    <text evidence="1">Homodimer. Heterotetramer of two MnmE and two MnmG subunits.</text>
</comment>
<comment type="subcellular location">
    <subcellularLocation>
        <location evidence="1">Cytoplasm</location>
    </subcellularLocation>
</comment>
<comment type="similarity">
    <text evidence="1">Belongs to the TRAFAC class TrmE-Era-EngA-EngB-Septin-like GTPase superfamily. TrmE GTPase family.</text>
</comment>
<reference key="1">
    <citation type="journal article" date="2007" name="PLoS ONE">
        <title>Analysis of the neurotoxin complex genes in Clostridium botulinum A1-A4 and B1 strains: BoNT/A3, /Ba4 and /B1 clusters are located within plasmids.</title>
        <authorList>
            <person name="Smith T.J."/>
            <person name="Hill K.K."/>
            <person name="Foley B.T."/>
            <person name="Detter J.C."/>
            <person name="Munk A.C."/>
            <person name="Bruce D.C."/>
            <person name="Doggett N.A."/>
            <person name="Smith L.A."/>
            <person name="Marks J.D."/>
            <person name="Xie G."/>
            <person name="Brettin T.S."/>
        </authorList>
    </citation>
    <scope>NUCLEOTIDE SEQUENCE [LARGE SCALE GENOMIC DNA]</scope>
    <source>
        <strain>Okra / Type B1</strain>
    </source>
</reference>
<accession>B1IHR9</accession>